<name>T5G1B_AGEOR</name>
<comment type="function">
    <text evidence="3">Insecticidal neurotoxin that modulates the insect Nav channel (DmNaV1/tipE (para/tipE)) in a unique manner, with both the activation and inactivation processes being affected. The voltage dependence of activation is shifted toward more hyperpolarized potentials (analogous to site 4 toxins) and a non-inactivating persistent sodium current is induced (site 3-like action). Interestingly, both effects take place in a voltage-dependent manner, producing a bell-shaped curve between -80 and 0 mV.</text>
</comment>
<comment type="subcellular location">
    <subcellularLocation>
        <location evidence="3">Secreted</location>
    </subcellularLocation>
</comment>
<comment type="tissue specificity">
    <text evidence="3">Expressed by the venom gland.</text>
</comment>
<comment type="domain">
    <text evidence="1">The presence of a 'disulfide through disulfide knot' structurally defines this protein as a knottin.</text>
</comment>
<comment type="mass spectrometry"/>
<comment type="miscellaneous">
    <text evidence="1">Negative results: does not affect mammalian sodium channels (Nav).</text>
</comment>
<comment type="similarity">
    <text evidence="5">Belongs to the neurotoxin 07 (Beta/delta-agtx) family. 04 (aga-5) subfamily.</text>
</comment>
<keyword id="KW-0027">Amidation</keyword>
<keyword id="KW-0903">Direct protein sequencing</keyword>
<keyword id="KW-1015">Disulfide bond</keyword>
<keyword id="KW-0872">Ion channel impairing toxin</keyword>
<keyword id="KW-0960">Knottin</keyword>
<keyword id="KW-0528">Neurotoxin</keyword>
<keyword id="KW-0964">Secreted</keyword>
<keyword id="KW-0732">Signal</keyword>
<keyword id="KW-0800">Toxin</keyword>
<keyword id="KW-0738">Voltage-gated sodium channel impairing toxin</keyword>
<proteinExistence type="evidence at protein level"/>
<protein>
    <recommendedName>
        <fullName>Mu-agatoxin-Ao1b</fullName>
        <shortName>Mu-AGTX-Ao1b</shortName>
    </recommendedName>
    <alternativeName>
        <fullName evidence="4">Beta/delta-agatoxin-6</fullName>
    </alternativeName>
    <alternativeName>
        <fullName evidence="6">Mu-2Aaga_14</fullName>
    </alternativeName>
</protein>
<dbReference type="EMBL" id="AY681338">
    <property type="protein sequence ID" value="AAU87898.1"/>
    <property type="molecule type" value="mRNA"/>
</dbReference>
<dbReference type="SMR" id="Q5Y4U6"/>
<dbReference type="ArachnoServer" id="AS000074">
    <property type="toxin name" value="mu-agatoxin-Ao1b"/>
</dbReference>
<dbReference type="GO" id="GO:0005576">
    <property type="term" value="C:extracellular region"/>
    <property type="evidence" value="ECO:0007669"/>
    <property type="project" value="UniProtKB-SubCell"/>
</dbReference>
<dbReference type="GO" id="GO:0008200">
    <property type="term" value="F:ion channel inhibitor activity"/>
    <property type="evidence" value="ECO:0007669"/>
    <property type="project" value="InterPro"/>
</dbReference>
<dbReference type="GO" id="GO:0017080">
    <property type="term" value="F:sodium channel regulator activity"/>
    <property type="evidence" value="ECO:0007669"/>
    <property type="project" value="UniProtKB-KW"/>
</dbReference>
<dbReference type="GO" id="GO:0090729">
    <property type="term" value="F:toxin activity"/>
    <property type="evidence" value="ECO:0007669"/>
    <property type="project" value="UniProtKB-KW"/>
</dbReference>
<dbReference type="CDD" id="cd12960">
    <property type="entry name" value="Spider_toxin"/>
    <property type="match status" value="1"/>
</dbReference>
<dbReference type="InterPro" id="IPR016328">
    <property type="entry name" value="Beta/delta-agatoxin_fam"/>
</dbReference>
<dbReference type="InterPro" id="IPR004169">
    <property type="entry name" value="Spidertoxin"/>
</dbReference>
<dbReference type="Pfam" id="PF05980">
    <property type="entry name" value="Toxin_7"/>
    <property type="match status" value="1"/>
</dbReference>
<dbReference type="SUPFAM" id="SSF57059">
    <property type="entry name" value="omega toxin-like"/>
    <property type="match status" value="1"/>
</dbReference>
<dbReference type="PROSITE" id="PS60015">
    <property type="entry name" value="MU_AGATOXIN"/>
    <property type="match status" value="1"/>
</dbReference>
<sequence>MKAIIFFCFLSVMVFIVAEASSLEALKIFEGERECVGENGHCRSWYNDCCDGYYCSCMQPPNCICRNNNG</sequence>
<feature type="signal peptide" evidence="2">
    <location>
        <begin position="1"/>
        <end position="20"/>
    </location>
</feature>
<feature type="propeptide" id="PRO_5000093679" evidence="3">
    <location>
        <begin position="21"/>
        <end position="33"/>
    </location>
</feature>
<feature type="chain" id="PRO_5000093680" description="Mu-agatoxin-Ao1b">
    <location>
        <begin position="34"/>
        <end position="69"/>
    </location>
</feature>
<feature type="modified residue" description="Asparagine amide" evidence="3">
    <location>
        <position position="69"/>
    </location>
</feature>
<feature type="disulfide bond" evidence="1">
    <location>
        <begin position="35"/>
        <end position="50"/>
    </location>
</feature>
<feature type="disulfide bond" evidence="1">
    <location>
        <begin position="42"/>
        <end position="55"/>
    </location>
</feature>
<feature type="disulfide bond" evidence="1">
    <location>
        <begin position="49"/>
        <end position="65"/>
    </location>
</feature>
<feature type="disulfide bond" evidence="1">
    <location>
        <begin position="57"/>
        <end position="63"/>
    </location>
</feature>
<organism>
    <name type="scientific">Agelena orientalis</name>
    <name type="common">Funnel-web spider</name>
    <dbReference type="NCBI Taxonomy" id="293813"/>
    <lineage>
        <taxon>Eukaryota</taxon>
        <taxon>Metazoa</taxon>
        <taxon>Ecdysozoa</taxon>
        <taxon>Arthropoda</taxon>
        <taxon>Chelicerata</taxon>
        <taxon>Arachnida</taxon>
        <taxon>Araneae</taxon>
        <taxon>Araneomorphae</taxon>
        <taxon>Entelegynae</taxon>
        <taxon>Agelenidae</taxon>
        <taxon>Agelena</taxon>
    </lineage>
</organism>
<evidence type="ECO:0000250" key="1"/>
<evidence type="ECO:0000255" key="2"/>
<evidence type="ECO:0000269" key="3">
    <source>
    </source>
</evidence>
<evidence type="ECO:0000303" key="4">
    <source>
    </source>
</evidence>
<evidence type="ECO:0000305" key="5"/>
<evidence type="ECO:0000312" key="6">
    <source>
        <dbReference type="EMBL" id="AAU87898.1"/>
    </source>
</evidence>
<reference key="1">
    <citation type="journal article" date="2005" name="Proteins">
        <title>A novel strategy for the identification of toxinlike structures in spider venom.</title>
        <authorList>
            <person name="Kozlov S.A."/>
            <person name="Malyavka A."/>
            <person name="McCutchen B."/>
            <person name="Lu A."/>
            <person name="Schepers E."/>
            <person name="Herrmann R."/>
            <person name="Grishin E.V."/>
        </authorList>
    </citation>
    <scope>NUCLEOTIDE SEQUENCE [MRNA]</scope>
    <source>
        <tissue>Venom gland</tissue>
    </source>
</reference>
<reference key="2">
    <citation type="journal article" date="2010" name="J. Biol. Chem.">
        <title>Unique bell-shaped voltage-dependent modulation of Na+ channel gating by novel insect-selective toxins from the spider Agelena orientalis.</title>
        <authorList>
            <person name="Billen B."/>
            <person name="Vassilevski A."/>
            <person name="Nikolsky A."/>
            <person name="Debaveye S."/>
            <person name="Tytgat J."/>
            <person name="Grishin E."/>
        </authorList>
    </citation>
    <scope>PROTEIN SEQUENCE OF 34-69</scope>
    <scope>FUNCTION</scope>
    <scope>SUBCELLULAR LOCATION</scope>
    <scope>TISSUE SPECIFICITY</scope>
    <scope>MASS SPECTROMETRY</scope>
    <scope>AMIDATION AT ASN-69</scope>
    <source>
        <tissue>Venom</tissue>
    </source>
</reference>
<accession>Q5Y4U6</accession>